<feature type="signal peptide" evidence="2">
    <location>
        <begin position="1"/>
        <end position="21"/>
    </location>
</feature>
<feature type="chain" id="PRO_0000026700" description="Testican-1">
    <location>
        <begin position="22"/>
        <end position="442"/>
    </location>
</feature>
<feature type="domain" description="Kazal-like" evidence="4">
    <location>
        <begin position="133"/>
        <end position="185"/>
    </location>
</feature>
<feature type="domain" description="Thyroglobulin type-1" evidence="3">
    <location>
        <begin position="313"/>
        <end position="379"/>
    </location>
</feature>
<feature type="region of interest" description="Disordered" evidence="5">
    <location>
        <begin position="375"/>
        <end position="395"/>
    </location>
</feature>
<feature type="region of interest" description="Disordered" evidence="5">
    <location>
        <begin position="420"/>
        <end position="442"/>
    </location>
</feature>
<feature type="compositionally biased region" description="Acidic residues" evidence="5">
    <location>
        <begin position="425"/>
        <end position="442"/>
    </location>
</feature>
<feature type="glycosylation site" description="O-linked (Xyl...) (glycosaminoglycan) serine" evidence="2">
    <location>
        <position position="386"/>
    </location>
</feature>
<feature type="glycosylation site" description="O-linked (Xyl...) (glycosaminoglycan) serine" evidence="2">
    <location>
        <position position="391"/>
    </location>
</feature>
<feature type="disulfide bond" evidence="1">
    <location>
        <begin position="89"/>
        <end position="100"/>
    </location>
</feature>
<feature type="disulfide bond" evidence="1">
    <location>
        <begin position="94"/>
        <end position="110"/>
    </location>
</feature>
<feature type="disulfide bond" evidence="1">
    <location>
        <begin position="139"/>
        <end position="169"/>
    </location>
</feature>
<feature type="disulfide bond" evidence="1">
    <location>
        <begin position="142"/>
        <end position="162"/>
    </location>
</feature>
<feature type="disulfide bond" evidence="1">
    <location>
        <begin position="151"/>
        <end position="183"/>
    </location>
</feature>
<feature type="disulfide bond" evidence="1">
    <location>
        <begin position="316"/>
        <end position="340"/>
    </location>
</feature>
<feature type="disulfide bond" evidence="1">
    <location>
        <begin position="351"/>
        <end position="358"/>
    </location>
</feature>
<feature type="disulfide bond" evidence="1">
    <location>
        <begin position="360"/>
        <end position="379"/>
    </location>
</feature>
<feature type="sequence conflict" description="In Ref. 1; CAA63448." evidence="6" ref="1">
    <original>GIQ</original>
    <variation>EVE</variation>
    <location>
        <begin position="63"/>
        <end position="65"/>
    </location>
</feature>
<feature type="sequence conflict" description="In Ref. 1; CAA63448." evidence="6" ref="1">
    <original>P</original>
    <variation>G</variation>
    <location>
        <position position="235"/>
    </location>
</feature>
<feature type="sequence conflict" description="In Ref. 1; CAA63448." evidence="6" ref="1">
    <original>EL</original>
    <variation>DV</variation>
    <location>
        <begin position="406"/>
        <end position="407"/>
    </location>
</feature>
<proteinExistence type="evidence at transcript level"/>
<sequence>MPAIAVLAAAAAAWCFLQVDSRHLDALAGGAALNNANFLDNDQWLSTVSQYDRDKYWNRFRDGIQDDYFRNWNPNKPFDQALDPSKDPCLKVKCSPHKVCVTQDYQTALCVSRKHLLPRQKKGNVAHKHWLGPSNLVKCKPCPVAQSAMVCGSDGHTYTSKCKLEFHACSTGKSLNSLCDGPCPCLPEPEPLKPKAEKSACTDKELRNLASRLKDWFGALHEDANRVIKPTSSDPAQGRFDTSILPICKDSLGWMFNKLDMNYDLLLDHSEINAIYLDKYEPCIKPLFNSCDSFKDGKLSNNEWCYCFQKPAGLPCQNEMNRIQKLSKGKSLLGAFIPRCNEEGYYKATQCHGSTGQCWCVDKYGNELAGSRKQGTVSCEEEQETSGDFGSGGSVVLLDDLEDERELGPKDKEGKLRVRTRAVREDDEDEDDDKEDEVGYIW</sequence>
<keyword id="KW-1015">Disulfide bond</keyword>
<keyword id="KW-0272">Extracellular matrix</keyword>
<keyword id="KW-0325">Glycoprotein</keyword>
<keyword id="KW-0357">Heparan sulfate</keyword>
<keyword id="KW-0654">Proteoglycan</keyword>
<keyword id="KW-1185">Reference proteome</keyword>
<keyword id="KW-0964">Secreted</keyword>
<keyword id="KW-0732">Signal</keyword>
<gene>
    <name type="primary">Spock1</name>
    <name type="synonym">Spock</name>
    <name type="synonym">Ticn1</name>
</gene>
<name>TICN1_MOUSE</name>
<reference key="1">
    <citation type="journal article" date="1996" name="J. Biol. Chem.">
        <title>Structure and cellular distribution of mouse brain testican. Association with the postsynaptic area of hippocampus pyramidal cells.</title>
        <authorList>
            <person name="Bonnet F."/>
            <person name="Perin J.-P."/>
            <person name="Charbonnier F."/>
            <person name="Camuzat A."/>
            <person name="Roussel G."/>
            <person name="Nussbaum J.-L."/>
            <person name="Alliel P.M."/>
        </authorList>
    </citation>
    <scope>NUCLEOTIDE SEQUENCE [MRNA]</scope>
    <source>
        <strain>BALB/cJ</strain>
        <tissue>Brain</tissue>
    </source>
</reference>
<reference key="2">
    <citation type="journal article" date="2009" name="PLoS Biol.">
        <title>Lineage-specific biology revealed by a finished genome assembly of the mouse.</title>
        <authorList>
            <person name="Church D.M."/>
            <person name="Goodstadt L."/>
            <person name="Hillier L.W."/>
            <person name="Zody M.C."/>
            <person name="Goldstein S."/>
            <person name="She X."/>
            <person name="Bult C.J."/>
            <person name="Agarwala R."/>
            <person name="Cherry J.L."/>
            <person name="DiCuccio M."/>
            <person name="Hlavina W."/>
            <person name="Kapustin Y."/>
            <person name="Meric P."/>
            <person name="Maglott D."/>
            <person name="Birtle Z."/>
            <person name="Marques A.C."/>
            <person name="Graves T."/>
            <person name="Zhou S."/>
            <person name="Teague B."/>
            <person name="Potamousis K."/>
            <person name="Churas C."/>
            <person name="Place M."/>
            <person name="Herschleb J."/>
            <person name="Runnheim R."/>
            <person name="Forrest D."/>
            <person name="Amos-Landgraf J."/>
            <person name="Schwartz D.C."/>
            <person name="Cheng Z."/>
            <person name="Lindblad-Toh K."/>
            <person name="Eichler E.E."/>
            <person name="Ponting C.P."/>
        </authorList>
    </citation>
    <scope>NUCLEOTIDE SEQUENCE [LARGE SCALE GENOMIC DNA]</scope>
    <source>
        <strain>C57BL/6J</strain>
    </source>
</reference>
<organism>
    <name type="scientific">Mus musculus</name>
    <name type="common">Mouse</name>
    <dbReference type="NCBI Taxonomy" id="10090"/>
    <lineage>
        <taxon>Eukaryota</taxon>
        <taxon>Metazoa</taxon>
        <taxon>Chordata</taxon>
        <taxon>Craniata</taxon>
        <taxon>Vertebrata</taxon>
        <taxon>Euteleostomi</taxon>
        <taxon>Mammalia</taxon>
        <taxon>Eutheria</taxon>
        <taxon>Euarchontoglires</taxon>
        <taxon>Glires</taxon>
        <taxon>Rodentia</taxon>
        <taxon>Myomorpha</taxon>
        <taxon>Muroidea</taxon>
        <taxon>Muridae</taxon>
        <taxon>Murinae</taxon>
        <taxon>Mus</taxon>
        <taxon>Mus</taxon>
    </lineage>
</organism>
<accession>Q62288</accession>
<accession>E9PYW3</accession>
<dbReference type="EMBL" id="X92864">
    <property type="protein sequence ID" value="CAA63448.1"/>
    <property type="molecule type" value="mRNA"/>
</dbReference>
<dbReference type="EMBL" id="AC142258">
    <property type="status" value="NOT_ANNOTATED_CDS"/>
    <property type="molecule type" value="Genomic_DNA"/>
</dbReference>
<dbReference type="EMBL" id="AC154210">
    <property type="status" value="NOT_ANNOTATED_CDS"/>
    <property type="molecule type" value="Genomic_DNA"/>
</dbReference>
<dbReference type="EMBL" id="AC154748">
    <property type="status" value="NOT_ANNOTATED_CDS"/>
    <property type="molecule type" value="Genomic_DNA"/>
</dbReference>
<dbReference type="EMBL" id="CT010428">
    <property type="status" value="NOT_ANNOTATED_CDS"/>
    <property type="molecule type" value="Genomic_DNA"/>
</dbReference>
<dbReference type="CCDS" id="CCDS79195.1"/>
<dbReference type="SMR" id="Q62288"/>
<dbReference type="FunCoup" id="Q62288">
    <property type="interactions" value="247"/>
</dbReference>
<dbReference type="STRING" id="10090.ENSMUSP00000140409"/>
<dbReference type="MEROPS" id="I31.006"/>
<dbReference type="GlyCosmos" id="Q62288">
    <property type="glycosylation" value="2 sites, No reported glycans"/>
</dbReference>
<dbReference type="GlyGen" id="Q62288">
    <property type="glycosylation" value="4 sites, 1 O-linked glycan (1 site)"/>
</dbReference>
<dbReference type="PhosphoSitePlus" id="Q62288"/>
<dbReference type="PaxDb" id="10090-ENSMUSP00000140409"/>
<dbReference type="PeptideAtlas" id="Q62288"/>
<dbReference type="ProteomicsDB" id="259188"/>
<dbReference type="AGR" id="MGI:105371"/>
<dbReference type="MGI" id="MGI:105371">
    <property type="gene designation" value="Spock1"/>
</dbReference>
<dbReference type="eggNOG" id="KOG3555">
    <property type="taxonomic scope" value="Eukaryota"/>
</dbReference>
<dbReference type="InParanoid" id="Q62288"/>
<dbReference type="ChiTaRS" id="Spock1">
    <property type="organism name" value="mouse"/>
</dbReference>
<dbReference type="PRO" id="PR:Q62288"/>
<dbReference type="Proteomes" id="UP000000589">
    <property type="component" value="Unplaced"/>
</dbReference>
<dbReference type="RNAct" id="Q62288">
    <property type="molecule type" value="protein"/>
</dbReference>
<dbReference type="GO" id="GO:0005737">
    <property type="term" value="C:cytoplasm"/>
    <property type="evidence" value="ECO:0000314"/>
    <property type="project" value="UniProtKB"/>
</dbReference>
<dbReference type="GO" id="GO:0005615">
    <property type="term" value="C:extracellular space"/>
    <property type="evidence" value="ECO:0000250"/>
    <property type="project" value="UniProtKB"/>
</dbReference>
<dbReference type="GO" id="GO:0031594">
    <property type="term" value="C:neuromuscular junction"/>
    <property type="evidence" value="ECO:0000314"/>
    <property type="project" value="UniProtKB"/>
</dbReference>
<dbReference type="GO" id="GO:0033268">
    <property type="term" value="C:node of Ranvier"/>
    <property type="evidence" value="ECO:0000314"/>
    <property type="project" value="UniProtKB"/>
</dbReference>
<dbReference type="GO" id="GO:0014069">
    <property type="term" value="C:postsynaptic density"/>
    <property type="evidence" value="ECO:0000314"/>
    <property type="project" value="SynGO"/>
</dbReference>
<dbReference type="GO" id="GO:0016528">
    <property type="term" value="C:sarcoplasm"/>
    <property type="evidence" value="ECO:0000314"/>
    <property type="project" value="UniProtKB"/>
</dbReference>
<dbReference type="GO" id="GO:0005509">
    <property type="term" value="F:calcium ion binding"/>
    <property type="evidence" value="ECO:0000250"/>
    <property type="project" value="UniProtKB"/>
</dbReference>
<dbReference type="GO" id="GO:0004869">
    <property type="term" value="F:cysteine-type endopeptidase inhibitor activity"/>
    <property type="evidence" value="ECO:0000250"/>
    <property type="project" value="UniProtKB"/>
</dbReference>
<dbReference type="GO" id="GO:0008191">
    <property type="term" value="F:metalloendopeptidase inhibitor activity"/>
    <property type="evidence" value="ECO:0000250"/>
    <property type="project" value="UniProtKB"/>
</dbReference>
<dbReference type="GO" id="GO:0021953">
    <property type="term" value="P:central nervous system neuron differentiation"/>
    <property type="evidence" value="ECO:0000270"/>
    <property type="project" value="UniProtKB"/>
</dbReference>
<dbReference type="GO" id="GO:0010812">
    <property type="term" value="P:negative regulation of cell-substrate adhesion"/>
    <property type="evidence" value="ECO:0000250"/>
    <property type="project" value="UniProtKB"/>
</dbReference>
<dbReference type="GO" id="GO:0010977">
    <property type="term" value="P:negative regulation of neuron projection development"/>
    <property type="evidence" value="ECO:0000250"/>
    <property type="project" value="UniProtKB"/>
</dbReference>
<dbReference type="GO" id="GO:0022008">
    <property type="term" value="P:neurogenesis"/>
    <property type="evidence" value="ECO:0000270"/>
    <property type="project" value="UniProtKB"/>
</dbReference>
<dbReference type="GO" id="GO:0001764">
    <property type="term" value="P:neuron migration"/>
    <property type="evidence" value="ECO:0000270"/>
    <property type="project" value="UniProtKB"/>
</dbReference>
<dbReference type="CDD" id="cd00104">
    <property type="entry name" value="KAZAL_FS"/>
    <property type="match status" value="1"/>
</dbReference>
<dbReference type="CDD" id="cd00191">
    <property type="entry name" value="TY"/>
    <property type="match status" value="1"/>
</dbReference>
<dbReference type="FunFam" id="1.10.238.10:FF:000053">
    <property type="entry name" value="Putative testican-3 isoform 3"/>
    <property type="match status" value="1"/>
</dbReference>
<dbReference type="FunFam" id="3.30.60.30:FF:000003">
    <property type="entry name" value="SPARC/osteonectin, cwcv and kazal-like domains proteoglycan 3"/>
    <property type="match status" value="1"/>
</dbReference>
<dbReference type="FunFam" id="4.10.800.10:FF:000006">
    <property type="entry name" value="testican-1 isoform X2"/>
    <property type="match status" value="1"/>
</dbReference>
<dbReference type="Gene3D" id="3.30.60.30">
    <property type="match status" value="1"/>
</dbReference>
<dbReference type="Gene3D" id="1.10.238.10">
    <property type="entry name" value="EF-hand"/>
    <property type="match status" value="1"/>
</dbReference>
<dbReference type="Gene3D" id="4.10.800.10">
    <property type="entry name" value="Thyroglobulin type-1"/>
    <property type="match status" value="1"/>
</dbReference>
<dbReference type="InterPro" id="IPR011992">
    <property type="entry name" value="EF-hand-dom_pair"/>
</dbReference>
<dbReference type="InterPro" id="IPR002350">
    <property type="entry name" value="Kazal_dom"/>
</dbReference>
<dbReference type="InterPro" id="IPR036058">
    <property type="entry name" value="Kazal_dom_sf"/>
</dbReference>
<dbReference type="InterPro" id="IPR019577">
    <property type="entry name" value="SPARC/Testican_Ca-bd-dom"/>
</dbReference>
<dbReference type="InterPro" id="IPR000716">
    <property type="entry name" value="Thyroglobulin_1"/>
</dbReference>
<dbReference type="InterPro" id="IPR036857">
    <property type="entry name" value="Thyroglobulin_1_sf"/>
</dbReference>
<dbReference type="PANTHER" id="PTHR13866">
    <property type="entry name" value="SPARC OSTEONECTIN"/>
    <property type="match status" value="1"/>
</dbReference>
<dbReference type="PANTHER" id="PTHR13866:SF17">
    <property type="entry name" value="TESTICAN-1"/>
    <property type="match status" value="1"/>
</dbReference>
<dbReference type="Pfam" id="PF07648">
    <property type="entry name" value="Kazal_2"/>
    <property type="match status" value="1"/>
</dbReference>
<dbReference type="Pfam" id="PF10591">
    <property type="entry name" value="SPARC_Ca_bdg"/>
    <property type="match status" value="1"/>
</dbReference>
<dbReference type="Pfam" id="PF00086">
    <property type="entry name" value="Thyroglobulin_1"/>
    <property type="match status" value="1"/>
</dbReference>
<dbReference type="SMART" id="SM00280">
    <property type="entry name" value="KAZAL"/>
    <property type="match status" value="1"/>
</dbReference>
<dbReference type="SMART" id="SM00211">
    <property type="entry name" value="TY"/>
    <property type="match status" value="1"/>
</dbReference>
<dbReference type="SUPFAM" id="SSF47473">
    <property type="entry name" value="EF-hand"/>
    <property type="match status" value="1"/>
</dbReference>
<dbReference type="SUPFAM" id="SSF100895">
    <property type="entry name" value="Kazal-type serine protease inhibitors"/>
    <property type="match status" value="1"/>
</dbReference>
<dbReference type="SUPFAM" id="SSF57610">
    <property type="entry name" value="Thyroglobulin type-1 domain"/>
    <property type="match status" value="1"/>
</dbReference>
<dbReference type="PROSITE" id="PS51465">
    <property type="entry name" value="KAZAL_2"/>
    <property type="match status" value="1"/>
</dbReference>
<dbReference type="PROSITE" id="PS00484">
    <property type="entry name" value="THYROGLOBULIN_1_1"/>
    <property type="match status" value="1"/>
</dbReference>
<dbReference type="PROSITE" id="PS51162">
    <property type="entry name" value="THYROGLOBULIN_1_2"/>
    <property type="match status" value="1"/>
</dbReference>
<comment type="function">
    <text>May play a role in cell-cell and cell-matrix interactions. May contribute to various neuronal mechanisms in the central nervous system.</text>
</comment>
<comment type="subcellular location">
    <subcellularLocation>
        <location>Secreted</location>
        <location>Extracellular space</location>
        <location>Extracellular matrix</location>
    </subcellularLocation>
</comment>
<comment type="tissue specificity">
    <text>Predominantly expressed in the postsynaptic area of pyramidal neurons.</text>
</comment>
<comment type="PTM">
    <text>Contains chondroitin sulfate and heparan sulfate O-linked oligosaccharides.</text>
</comment>
<evidence type="ECO:0000250" key="1"/>
<evidence type="ECO:0000255" key="2"/>
<evidence type="ECO:0000255" key="3">
    <source>
        <dbReference type="PROSITE-ProRule" id="PRU00500"/>
    </source>
</evidence>
<evidence type="ECO:0000255" key="4">
    <source>
        <dbReference type="PROSITE-ProRule" id="PRU00798"/>
    </source>
</evidence>
<evidence type="ECO:0000256" key="5">
    <source>
        <dbReference type="SAM" id="MobiDB-lite"/>
    </source>
</evidence>
<evidence type="ECO:0000305" key="6"/>
<protein>
    <recommendedName>
        <fullName>Testican-1</fullName>
    </recommendedName>
    <alternativeName>
        <fullName>Protein SPOCK</fullName>
    </alternativeName>
</protein>